<name>RN103_HUMAN</name>
<proteinExistence type="evidence at protein level"/>
<evidence type="ECO:0000255" key="1"/>
<evidence type="ECO:0000255" key="2">
    <source>
        <dbReference type="PROSITE-ProRule" id="PRU00175"/>
    </source>
</evidence>
<evidence type="ECO:0000256" key="3">
    <source>
        <dbReference type="SAM" id="MobiDB-lite"/>
    </source>
</evidence>
<evidence type="ECO:0000269" key="4">
    <source>
    </source>
</evidence>
<evidence type="ECO:0000269" key="5">
    <source>
    </source>
</evidence>
<evidence type="ECO:0000269" key="6">
    <source>
    </source>
</evidence>
<evidence type="ECO:0000305" key="7"/>
<organism>
    <name type="scientific">Homo sapiens</name>
    <name type="common">Human</name>
    <dbReference type="NCBI Taxonomy" id="9606"/>
    <lineage>
        <taxon>Eukaryota</taxon>
        <taxon>Metazoa</taxon>
        <taxon>Chordata</taxon>
        <taxon>Craniata</taxon>
        <taxon>Vertebrata</taxon>
        <taxon>Euteleostomi</taxon>
        <taxon>Mammalia</taxon>
        <taxon>Eutheria</taxon>
        <taxon>Euarchontoglires</taxon>
        <taxon>Primates</taxon>
        <taxon>Haplorrhini</taxon>
        <taxon>Catarrhini</taxon>
        <taxon>Hominidae</taxon>
        <taxon>Homo</taxon>
    </lineage>
</organism>
<accession>O00237</accession>
<accession>A6NFV6</accession>
<accession>B2RAG4</accession>
<accession>Q53SU6</accession>
<accession>Q8IVB9</accession>
<sequence>MWLKLFFLLLYFLVLFVLARFFEAIVWYETGIFATQLVDPVALSFKKLKTILECRGLGYSGLPEKKDVRELVEKSGDLMEGELYSALKEEEASESVSSTNFSGEMHFYELVEDTKDGIWLVQVIANDRSPLVGKIHWEKMVKKVSRFGIRTGTFNCSSDPRYCRRRGWVRSTLIMSVPQTSTSKGKVMLKEYSGRKIEVEHIFKWITAHAASRIKTIYNAEHLKEEWNKSDQYWLKIYLFANLDQPPAFFSALSIKFTGRVEFIFVNVENWDNKSYMTDIGIYNMPSYILRTPEGIYRYGNHTGEFISLQAMDSFLRSLQPEVNDLFVLSLVLVNLMAWMDLFITQGATIKRFVVLISTLGTYNSLLIISWLPVLGFLQLPYLDSFYEYSLKLLRYSNTTTLASWVRADWMFYSSHPALFLSTYLGHGLLIDYFEKKRRRNNNNDEVNANNLEWLSSLWDWYTSYLFHPIASFQNFPVESDWDEDPDLFLERLAFPDLWLHPLIPTDYIKNLPMWRFKCLGVQSEEEMSEGSQDTENDSESENTDTLSSEKEVFEDKQSVLHNSPGTASHCDAEACSCANKYCQTSPCERKGRSYGSYNTNEDMEPDWLTWPADMLHCTECVVCLENFENGCLLMGLPCGHVFHQNCIVMWLAGGRHCCPVCRWPSYKKKQPYAQHQPLSNDVPS</sequence>
<dbReference type="EC" id="2.3.2.27"/>
<dbReference type="EMBL" id="D76444">
    <property type="protein sequence ID" value="BAA19739.1"/>
    <property type="molecule type" value="mRNA"/>
</dbReference>
<dbReference type="EMBL" id="AB052743">
    <property type="protein sequence ID" value="BAB20900.1"/>
    <property type="molecule type" value="Genomic_DNA"/>
</dbReference>
<dbReference type="EMBL" id="AK314180">
    <property type="protein sequence ID" value="BAG36861.1"/>
    <property type="molecule type" value="mRNA"/>
</dbReference>
<dbReference type="EMBL" id="AC015971">
    <property type="protein sequence ID" value="AAX93079.1"/>
    <property type="molecule type" value="Genomic_DNA"/>
</dbReference>
<dbReference type="EMBL" id="BC035053">
    <property type="protein sequence ID" value="AAH35053.1"/>
    <property type="molecule type" value="mRNA"/>
</dbReference>
<dbReference type="EMBL" id="BC110333">
    <property type="protein sequence ID" value="AAI10334.1"/>
    <property type="molecule type" value="mRNA"/>
</dbReference>
<dbReference type="CCDS" id="CCDS33237.1"/>
<dbReference type="PIR" id="JC5392">
    <property type="entry name" value="JC5392"/>
</dbReference>
<dbReference type="RefSeq" id="NP_001185880.1">
    <property type="nucleotide sequence ID" value="NM_001198951.1"/>
</dbReference>
<dbReference type="RefSeq" id="NP_001185881.1">
    <property type="nucleotide sequence ID" value="NM_001198952.1"/>
</dbReference>
<dbReference type="RefSeq" id="NP_005658.1">
    <property type="nucleotide sequence ID" value="NM_005667.4"/>
</dbReference>
<dbReference type="SMR" id="O00237"/>
<dbReference type="BioGRID" id="113601">
    <property type="interactions" value="28"/>
</dbReference>
<dbReference type="FunCoup" id="O00237">
    <property type="interactions" value="802"/>
</dbReference>
<dbReference type="IntAct" id="O00237">
    <property type="interactions" value="10"/>
</dbReference>
<dbReference type="STRING" id="9606.ENSP00000237455"/>
<dbReference type="GlyGen" id="O00237">
    <property type="glycosylation" value="1 site, 1 N-linked glycan (1 site)"/>
</dbReference>
<dbReference type="iPTMnet" id="O00237"/>
<dbReference type="PhosphoSitePlus" id="O00237"/>
<dbReference type="BioMuta" id="RNF103"/>
<dbReference type="jPOST" id="O00237"/>
<dbReference type="PaxDb" id="9606-ENSP00000237455"/>
<dbReference type="PeptideAtlas" id="O00237"/>
<dbReference type="ProteomicsDB" id="47801"/>
<dbReference type="Antibodypedia" id="34817">
    <property type="antibodies" value="122 antibodies from 21 providers"/>
</dbReference>
<dbReference type="DNASU" id="7844"/>
<dbReference type="Ensembl" id="ENST00000237455.5">
    <property type="protein sequence ID" value="ENSP00000237455.4"/>
    <property type="gene ID" value="ENSG00000239305.7"/>
</dbReference>
<dbReference type="GeneID" id="7844"/>
<dbReference type="KEGG" id="hsa:7844"/>
<dbReference type="MANE-Select" id="ENST00000237455.5">
    <property type="protein sequence ID" value="ENSP00000237455.4"/>
    <property type="RefSeq nucleotide sequence ID" value="NM_005667.4"/>
    <property type="RefSeq protein sequence ID" value="NP_005658.1"/>
</dbReference>
<dbReference type="UCSC" id="uc002srn.4">
    <property type="organism name" value="human"/>
</dbReference>
<dbReference type="AGR" id="HGNC:12859"/>
<dbReference type="CTD" id="7844"/>
<dbReference type="DisGeNET" id="7844"/>
<dbReference type="GeneCards" id="RNF103"/>
<dbReference type="HGNC" id="HGNC:12859">
    <property type="gene designation" value="RNF103"/>
</dbReference>
<dbReference type="HPA" id="ENSG00000239305">
    <property type="expression patterns" value="Low tissue specificity"/>
</dbReference>
<dbReference type="MIM" id="602507">
    <property type="type" value="gene"/>
</dbReference>
<dbReference type="neXtProt" id="NX_O00237"/>
<dbReference type="OpenTargets" id="ENSG00000239305"/>
<dbReference type="PharmGKB" id="PA37448"/>
<dbReference type="VEuPathDB" id="HostDB:ENSG00000239305"/>
<dbReference type="eggNOG" id="KOG0800">
    <property type="taxonomic scope" value="Eukaryota"/>
</dbReference>
<dbReference type="GeneTree" id="ENSGT00390000006413"/>
<dbReference type="HOGENOM" id="CLU_031351_0_0_1"/>
<dbReference type="InParanoid" id="O00237"/>
<dbReference type="OMA" id="PDWLAWP"/>
<dbReference type="OrthoDB" id="8062037at2759"/>
<dbReference type="PAN-GO" id="O00237">
    <property type="GO annotations" value="4 GO annotations based on evolutionary models"/>
</dbReference>
<dbReference type="PhylomeDB" id="O00237"/>
<dbReference type="TreeFam" id="TF329229"/>
<dbReference type="PathwayCommons" id="O00237"/>
<dbReference type="Reactome" id="R-HSA-901032">
    <property type="pathway name" value="ER Quality Control Compartment (ERQC)"/>
</dbReference>
<dbReference type="SignaLink" id="O00237"/>
<dbReference type="SIGNOR" id="O00237"/>
<dbReference type="UniPathway" id="UPA00143"/>
<dbReference type="BioGRID-ORCS" id="7844">
    <property type="hits" value="25 hits in 1198 CRISPR screens"/>
</dbReference>
<dbReference type="GenomeRNAi" id="7844"/>
<dbReference type="Pharos" id="O00237">
    <property type="development level" value="Tbio"/>
</dbReference>
<dbReference type="PRO" id="PR:O00237"/>
<dbReference type="Proteomes" id="UP000005640">
    <property type="component" value="Chromosome 2"/>
</dbReference>
<dbReference type="RNAct" id="O00237">
    <property type="molecule type" value="protein"/>
</dbReference>
<dbReference type="Bgee" id="ENSG00000239305">
    <property type="expression patterns" value="Expressed in middle temporal gyrus and 210 other cell types or tissues"/>
</dbReference>
<dbReference type="GO" id="GO:0005783">
    <property type="term" value="C:endoplasmic reticulum"/>
    <property type="evidence" value="ECO:0000314"/>
    <property type="project" value="UniProtKB"/>
</dbReference>
<dbReference type="GO" id="GO:0005789">
    <property type="term" value="C:endoplasmic reticulum membrane"/>
    <property type="evidence" value="ECO:0000304"/>
    <property type="project" value="Reactome"/>
</dbReference>
<dbReference type="GO" id="GO:0044322">
    <property type="term" value="C:endoplasmic reticulum quality control compartment"/>
    <property type="evidence" value="ECO:0007669"/>
    <property type="project" value="GOC"/>
</dbReference>
<dbReference type="GO" id="GO:0061630">
    <property type="term" value="F:ubiquitin protein ligase activity"/>
    <property type="evidence" value="ECO:0000304"/>
    <property type="project" value="Reactome"/>
</dbReference>
<dbReference type="GO" id="GO:0004842">
    <property type="term" value="F:ubiquitin-protein transferase activity"/>
    <property type="evidence" value="ECO:0000314"/>
    <property type="project" value="UniProtKB"/>
</dbReference>
<dbReference type="GO" id="GO:0008270">
    <property type="term" value="F:zinc ion binding"/>
    <property type="evidence" value="ECO:0007669"/>
    <property type="project" value="UniProtKB-KW"/>
</dbReference>
<dbReference type="GO" id="GO:0007417">
    <property type="term" value="P:central nervous system development"/>
    <property type="evidence" value="ECO:0000304"/>
    <property type="project" value="ProtInc"/>
</dbReference>
<dbReference type="GO" id="GO:1904380">
    <property type="term" value="P:endoplasmic reticulum mannose trimming"/>
    <property type="evidence" value="ECO:0000304"/>
    <property type="project" value="Reactome"/>
</dbReference>
<dbReference type="GO" id="GO:0036503">
    <property type="term" value="P:ERAD pathway"/>
    <property type="evidence" value="ECO:0000314"/>
    <property type="project" value="UniProtKB"/>
</dbReference>
<dbReference type="GO" id="GO:0016567">
    <property type="term" value="P:protein ubiquitination"/>
    <property type="evidence" value="ECO:0000314"/>
    <property type="project" value="UniProtKB"/>
</dbReference>
<dbReference type="CDD" id="cd16473">
    <property type="entry name" value="RING-H2_RNF103"/>
    <property type="match status" value="1"/>
</dbReference>
<dbReference type="FunFam" id="3.30.40.10:FF:000320">
    <property type="entry name" value="E3 ubiquitin-protein ligase RNF103 isoform X1"/>
    <property type="match status" value="1"/>
</dbReference>
<dbReference type="Gene3D" id="3.30.40.10">
    <property type="entry name" value="Zinc/RING finger domain, C3HC4 (zinc finger)"/>
    <property type="match status" value="1"/>
</dbReference>
<dbReference type="InterPro" id="IPR042494">
    <property type="entry name" value="RNF103"/>
</dbReference>
<dbReference type="InterPro" id="IPR001841">
    <property type="entry name" value="Znf_RING"/>
</dbReference>
<dbReference type="InterPro" id="IPR013083">
    <property type="entry name" value="Znf_RING/FYVE/PHD"/>
</dbReference>
<dbReference type="PANTHER" id="PTHR15302">
    <property type="entry name" value="E3 UBIQUITIN-PROTEIN LIGASE RNF103"/>
    <property type="match status" value="1"/>
</dbReference>
<dbReference type="PANTHER" id="PTHR15302:SF0">
    <property type="entry name" value="E3 UBIQUITIN-PROTEIN LIGASE RNF103"/>
    <property type="match status" value="1"/>
</dbReference>
<dbReference type="Pfam" id="PF13639">
    <property type="entry name" value="zf-RING_2"/>
    <property type="match status" value="1"/>
</dbReference>
<dbReference type="SMART" id="SM00184">
    <property type="entry name" value="RING"/>
    <property type="match status" value="1"/>
</dbReference>
<dbReference type="SUPFAM" id="SSF57850">
    <property type="entry name" value="RING/U-box"/>
    <property type="match status" value="1"/>
</dbReference>
<dbReference type="PROSITE" id="PS50089">
    <property type="entry name" value="ZF_RING_2"/>
    <property type="match status" value="1"/>
</dbReference>
<feature type="chain" id="PRO_0000056084" description="E3 ubiquitin-protein ligase RNF103">
    <location>
        <begin position="1"/>
        <end position="685"/>
    </location>
</feature>
<feature type="transmembrane region" description="Helical" evidence="1">
    <location>
        <begin position="6"/>
        <end position="26"/>
    </location>
</feature>
<feature type="transmembrane region" description="Helical" evidence="1">
    <location>
        <begin position="326"/>
        <end position="346"/>
    </location>
</feature>
<feature type="transmembrane region" description="Helical" evidence="1">
    <location>
        <begin position="366"/>
        <end position="386"/>
    </location>
</feature>
<feature type="transmembrane region" description="Helical" evidence="1">
    <location>
        <begin position="411"/>
        <end position="431"/>
    </location>
</feature>
<feature type="zinc finger region" description="RING-type" evidence="2">
    <location>
        <begin position="621"/>
        <end position="663"/>
    </location>
</feature>
<feature type="region of interest" description="Disordered" evidence="3">
    <location>
        <begin position="526"/>
        <end position="550"/>
    </location>
</feature>
<feature type="compositionally biased region" description="Acidic residues" evidence="3">
    <location>
        <begin position="526"/>
        <end position="543"/>
    </location>
</feature>
<feature type="mutagenesis site" description="Loss of E2-dependent ubiquitination." evidence="4">
    <original>C</original>
    <variation>S</variation>
    <location>
        <position position="621"/>
    </location>
</feature>
<feature type="sequence conflict" description="In Ref. 3; BAG36861." evidence="7" ref="3">
    <original>F</original>
    <variation>L</variation>
    <location>
        <position position="22"/>
    </location>
</feature>
<feature type="sequence conflict" description="In Ref. 5; AAH35053." evidence="7" ref="5">
    <original>S</original>
    <variation>P</variation>
    <location>
        <position position="251"/>
    </location>
</feature>
<feature type="sequence conflict" description="In Ref. 3; BAG36861." evidence="7" ref="3">
    <original>S</original>
    <variation>P</variation>
    <location>
        <position position="287"/>
    </location>
</feature>
<feature type="sequence conflict" description="In Ref. 5; AAH35053." evidence="7" ref="5">
    <original>P</original>
    <variation>H</variation>
    <location>
        <position position="502"/>
    </location>
</feature>
<gene>
    <name type="primary">RNF103</name>
    <name type="synonym">ZFP103</name>
</gene>
<protein>
    <recommendedName>
        <fullName>E3 ubiquitin-protein ligase RNF103</fullName>
        <ecNumber>2.3.2.27</ecNumber>
    </recommendedName>
    <alternativeName>
        <fullName>KF-1</fullName>
        <shortName>hKF-1</shortName>
    </alternativeName>
    <alternativeName>
        <fullName>RING finger protein 103</fullName>
    </alternativeName>
    <alternativeName>
        <fullName evidence="7">RING-type E3 ubiquitin transferase RNF103</fullName>
    </alternativeName>
    <alternativeName>
        <fullName>Zinc finger protein 103 homolog</fullName>
        <shortName>Zfp-103</shortName>
    </alternativeName>
</protein>
<comment type="function">
    <text evidence="4 5">Acts as an E2-dependent E3 ubiquitin-protein ligase, probably involved in the ER-associated protein degradation pathway.</text>
</comment>
<comment type="catalytic activity">
    <reaction>
        <text>S-ubiquitinyl-[E2 ubiquitin-conjugating enzyme]-L-cysteine + [acceptor protein]-L-lysine = [E2 ubiquitin-conjugating enzyme]-L-cysteine + N(6)-ubiquitinyl-[acceptor protein]-L-lysine.</text>
        <dbReference type="EC" id="2.3.2.27"/>
    </reaction>
</comment>
<comment type="pathway">
    <text>Protein modification; protein ubiquitination.</text>
</comment>
<comment type="subunit">
    <text evidence="5">Interacts with DERL1 and VCP.</text>
</comment>
<comment type="subcellular location">
    <subcellularLocation>
        <location evidence="5">Endoplasmic reticulum membrane</location>
        <topology evidence="5">Multi-pass membrane protein</topology>
    </subcellularLocation>
</comment>
<comment type="tissue specificity">
    <text evidence="6">Highly expressed in the normal cerebellum but not in the cerebral cortex.</text>
</comment>
<keyword id="KW-0256">Endoplasmic reticulum</keyword>
<keyword id="KW-0472">Membrane</keyword>
<keyword id="KW-0479">Metal-binding</keyword>
<keyword id="KW-1267">Proteomics identification</keyword>
<keyword id="KW-1185">Reference proteome</keyword>
<keyword id="KW-0808">Transferase</keyword>
<keyword id="KW-0812">Transmembrane</keyword>
<keyword id="KW-1133">Transmembrane helix</keyword>
<keyword id="KW-0833">Ubl conjugation pathway</keyword>
<keyword id="KW-0862">Zinc</keyword>
<keyword id="KW-0863">Zinc-finger</keyword>
<reference key="1">
    <citation type="journal article" date="1997" name="Biochem. Biophys. Res. Commun.">
        <title>Cloning of human and mouse cDNAs encoding novel zinc finger proteins expressed in cerebellum and hippocampus.</title>
        <authorList>
            <person name="Yasojima K."/>
            <person name="Tsujimura A."/>
            <person name="Mizuno T."/>
            <person name="Shigeyoshi Y."/>
            <person name="Inazawa J."/>
            <person name="Kikuno R."/>
            <person name="Kuma K."/>
            <person name="Ohkubo K."/>
            <person name="Hosokawa Y."/>
            <person name="Ibata Y."/>
            <person name="Abe T."/>
            <person name="Miyata T."/>
            <person name="Matsubara K."/>
            <person name="Nakajima K."/>
            <person name="Hashimoto-Gotoh T."/>
        </authorList>
    </citation>
    <scope>NUCLEOTIDE SEQUENCE [MRNA]</scope>
    <scope>TISSUE SPECIFICITY</scope>
    <source>
        <tissue>Brain</tissue>
    </source>
</reference>
<reference key="2">
    <citation type="submission" date="2000-12" db="EMBL/GenBank/DDBJ databases">
        <title>Structure of human kf-1 genomic DNA.</title>
        <authorList>
            <person name="Tsujimura A."/>
            <person name="Hashimoto-Gotoh T."/>
        </authorList>
    </citation>
    <scope>NUCLEOTIDE SEQUENCE [GENOMIC DNA]</scope>
    <source>
        <tissue>Peripheral blood</tissue>
    </source>
</reference>
<reference key="3">
    <citation type="journal article" date="2004" name="Nat. Genet.">
        <title>Complete sequencing and characterization of 21,243 full-length human cDNAs.</title>
        <authorList>
            <person name="Ota T."/>
            <person name="Suzuki Y."/>
            <person name="Nishikawa T."/>
            <person name="Otsuki T."/>
            <person name="Sugiyama T."/>
            <person name="Irie R."/>
            <person name="Wakamatsu A."/>
            <person name="Hayashi K."/>
            <person name="Sato H."/>
            <person name="Nagai K."/>
            <person name="Kimura K."/>
            <person name="Makita H."/>
            <person name="Sekine M."/>
            <person name="Obayashi M."/>
            <person name="Nishi T."/>
            <person name="Shibahara T."/>
            <person name="Tanaka T."/>
            <person name="Ishii S."/>
            <person name="Yamamoto J."/>
            <person name="Saito K."/>
            <person name="Kawai Y."/>
            <person name="Isono Y."/>
            <person name="Nakamura Y."/>
            <person name="Nagahari K."/>
            <person name="Murakami K."/>
            <person name="Yasuda T."/>
            <person name="Iwayanagi T."/>
            <person name="Wagatsuma M."/>
            <person name="Shiratori A."/>
            <person name="Sudo H."/>
            <person name="Hosoiri T."/>
            <person name="Kaku Y."/>
            <person name="Kodaira H."/>
            <person name="Kondo H."/>
            <person name="Sugawara M."/>
            <person name="Takahashi M."/>
            <person name="Kanda K."/>
            <person name="Yokoi T."/>
            <person name="Furuya T."/>
            <person name="Kikkawa E."/>
            <person name="Omura Y."/>
            <person name="Abe K."/>
            <person name="Kamihara K."/>
            <person name="Katsuta N."/>
            <person name="Sato K."/>
            <person name="Tanikawa M."/>
            <person name="Yamazaki M."/>
            <person name="Ninomiya K."/>
            <person name="Ishibashi T."/>
            <person name="Yamashita H."/>
            <person name="Murakawa K."/>
            <person name="Fujimori K."/>
            <person name="Tanai H."/>
            <person name="Kimata M."/>
            <person name="Watanabe M."/>
            <person name="Hiraoka S."/>
            <person name="Chiba Y."/>
            <person name="Ishida S."/>
            <person name="Ono Y."/>
            <person name="Takiguchi S."/>
            <person name="Watanabe S."/>
            <person name="Yosida M."/>
            <person name="Hotuta T."/>
            <person name="Kusano J."/>
            <person name="Kanehori K."/>
            <person name="Takahashi-Fujii A."/>
            <person name="Hara H."/>
            <person name="Tanase T.-O."/>
            <person name="Nomura Y."/>
            <person name="Togiya S."/>
            <person name="Komai F."/>
            <person name="Hara R."/>
            <person name="Takeuchi K."/>
            <person name="Arita M."/>
            <person name="Imose N."/>
            <person name="Musashino K."/>
            <person name="Yuuki H."/>
            <person name="Oshima A."/>
            <person name="Sasaki N."/>
            <person name="Aotsuka S."/>
            <person name="Yoshikawa Y."/>
            <person name="Matsunawa H."/>
            <person name="Ichihara T."/>
            <person name="Shiohata N."/>
            <person name="Sano S."/>
            <person name="Moriya S."/>
            <person name="Momiyama H."/>
            <person name="Satoh N."/>
            <person name="Takami S."/>
            <person name="Terashima Y."/>
            <person name="Suzuki O."/>
            <person name="Nakagawa S."/>
            <person name="Senoh A."/>
            <person name="Mizoguchi H."/>
            <person name="Goto Y."/>
            <person name="Shimizu F."/>
            <person name="Wakebe H."/>
            <person name="Hishigaki H."/>
            <person name="Watanabe T."/>
            <person name="Sugiyama A."/>
            <person name="Takemoto M."/>
            <person name="Kawakami B."/>
            <person name="Yamazaki M."/>
            <person name="Watanabe K."/>
            <person name="Kumagai A."/>
            <person name="Itakura S."/>
            <person name="Fukuzumi Y."/>
            <person name="Fujimori Y."/>
            <person name="Komiyama M."/>
            <person name="Tashiro H."/>
            <person name="Tanigami A."/>
            <person name="Fujiwara T."/>
            <person name="Ono T."/>
            <person name="Yamada K."/>
            <person name="Fujii Y."/>
            <person name="Ozaki K."/>
            <person name="Hirao M."/>
            <person name="Ohmori Y."/>
            <person name="Kawabata A."/>
            <person name="Hikiji T."/>
            <person name="Kobatake N."/>
            <person name="Inagaki H."/>
            <person name="Ikema Y."/>
            <person name="Okamoto S."/>
            <person name="Okitani R."/>
            <person name="Kawakami T."/>
            <person name="Noguchi S."/>
            <person name="Itoh T."/>
            <person name="Shigeta K."/>
            <person name="Senba T."/>
            <person name="Matsumura K."/>
            <person name="Nakajima Y."/>
            <person name="Mizuno T."/>
            <person name="Morinaga M."/>
            <person name="Sasaki M."/>
            <person name="Togashi T."/>
            <person name="Oyama M."/>
            <person name="Hata H."/>
            <person name="Watanabe M."/>
            <person name="Komatsu T."/>
            <person name="Mizushima-Sugano J."/>
            <person name="Satoh T."/>
            <person name="Shirai Y."/>
            <person name="Takahashi Y."/>
            <person name="Nakagawa K."/>
            <person name="Okumura K."/>
            <person name="Nagase T."/>
            <person name="Nomura N."/>
            <person name="Kikuchi H."/>
            <person name="Masuho Y."/>
            <person name="Yamashita R."/>
            <person name="Nakai K."/>
            <person name="Yada T."/>
            <person name="Nakamura Y."/>
            <person name="Ohara O."/>
            <person name="Isogai T."/>
            <person name="Sugano S."/>
        </authorList>
    </citation>
    <scope>NUCLEOTIDE SEQUENCE [LARGE SCALE MRNA]</scope>
    <source>
        <tissue>Brain</tissue>
    </source>
</reference>
<reference key="4">
    <citation type="journal article" date="2005" name="Nature">
        <title>Generation and annotation of the DNA sequences of human chromosomes 2 and 4.</title>
        <authorList>
            <person name="Hillier L.W."/>
            <person name="Graves T.A."/>
            <person name="Fulton R.S."/>
            <person name="Fulton L.A."/>
            <person name="Pepin K.H."/>
            <person name="Minx P."/>
            <person name="Wagner-McPherson C."/>
            <person name="Layman D."/>
            <person name="Wylie K."/>
            <person name="Sekhon M."/>
            <person name="Becker M.C."/>
            <person name="Fewell G.A."/>
            <person name="Delehaunty K.D."/>
            <person name="Miner T.L."/>
            <person name="Nash W.E."/>
            <person name="Kremitzki C."/>
            <person name="Oddy L."/>
            <person name="Du H."/>
            <person name="Sun H."/>
            <person name="Bradshaw-Cordum H."/>
            <person name="Ali J."/>
            <person name="Carter J."/>
            <person name="Cordes M."/>
            <person name="Harris A."/>
            <person name="Isak A."/>
            <person name="van Brunt A."/>
            <person name="Nguyen C."/>
            <person name="Du F."/>
            <person name="Courtney L."/>
            <person name="Kalicki J."/>
            <person name="Ozersky P."/>
            <person name="Abbott S."/>
            <person name="Armstrong J."/>
            <person name="Belter E.A."/>
            <person name="Caruso L."/>
            <person name="Cedroni M."/>
            <person name="Cotton M."/>
            <person name="Davidson T."/>
            <person name="Desai A."/>
            <person name="Elliott G."/>
            <person name="Erb T."/>
            <person name="Fronick C."/>
            <person name="Gaige T."/>
            <person name="Haakenson W."/>
            <person name="Haglund K."/>
            <person name="Holmes A."/>
            <person name="Harkins R."/>
            <person name="Kim K."/>
            <person name="Kruchowski S.S."/>
            <person name="Strong C.M."/>
            <person name="Grewal N."/>
            <person name="Goyea E."/>
            <person name="Hou S."/>
            <person name="Levy A."/>
            <person name="Martinka S."/>
            <person name="Mead K."/>
            <person name="McLellan M.D."/>
            <person name="Meyer R."/>
            <person name="Randall-Maher J."/>
            <person name="Tomlinson C."/>
            <person name="Dauphin-Kohlberg S."/>
            <person name="Kozlowicz-Reilly A."/>
            <person name="Shah N."/>
            <person name="Swearengen-Shahid S."/>
            <person name="Snider J."/>
            <person name="Strong J.T."/>
            <person name="Thompson J."/>
            <person name="Yoakum M."/>
            <person name="Leonard S."/>
            <person name="Pearman C."/>
            <person name="Trani L."/>
            <person name="Radionenko M."/>
            <person name="Waligorski J.E."/>
            <person name="Wang C."/>
            <person name="Rock S.M."/>
            <person name="Tin-Wollam A.-M."/>
            <person name="Maupin R."/>
            <person name="Latreille P."/>
            <person name="Wendl M.C."/>
            <person name="Yang S.-P."/>
            <person name="Pohl C."/>
            <person name="Wallis J.W."/>
            <person name="Spieth J."/>
            <person name="Bieri T.A."/>
            <person name="Berkowicz N."/>
            <person name="Nelson J.O."/>
            <person name="Osborne J."/>
            <person name="Ding L."/>
            <person name="Meyer R."/>
            <person name="Sabo A."/>
            <person name="Shotland Y."/>
            <person name="Sinha P."/>
            <person name="Wohldmann P.E."/>
            <person name="Cook L.L."/>
            <person name="Hickenbotham M.T."/>
            <person name="Eldred J."/>
            <person name="Williams D."/>
            <person name="Jones T.A."/>
            <person name="She X."/>
            <person name="Ciccarelli F.D."/>
            <person name="Izaurralde E."/>
            <person name="Taylor J."/>
            <person name="Schmutz J."/>
            <person name="Myers R.M."/>
            <person name="Cox D.R."/>
            <person name="Huang X."/>
            <person name="McPherson J.D."/>
            <person name="Mardis E.R."/>
            <person name="Clifton S.W."/>
            <person name="Warren W.C."/>
            <person name="Chinwalla A.T."/>
            <person name="Eddy S.R."/>
            <person name="Marra M.A."/>
            <person name="Ovcharenko I."/>
            <person name="Furey T.S."/>
            <person name="Miller W."/>
            <person name="Eichler E.E."/>
            <person name="Bork P."/>
            <person name="Suyama M."/>
            <person name="Torrents D."/>
            <person name="Waterston R.H."/>
            <person name="Wilson R.K."/>
        </authorList>
    </citation>
    <scope>NUCLEOTIDE SEQUENCE [LARGE SCALE GENOMIC DNA]</scope>
</reference>
<reference key="5">
    <citation type="journal article" date="2004" name="Genome Res.">
        <title>The status, quality, and expansion of the NIH full-length cDNA project: the Mammalian Gene Collection (MGC).</title>
        <authorList>
            <consortium name="The MGC Project Team"/>
        </authorList>
    </citation>
    <scope>NUCLEOTIDE SEQUENCE [LARGE SCALE MRNA]</scope>
    <source>
        <tissue>Brain</tissue>
    </source>
</reference>
<reference key="6">
    <citation type="journal article" date="1999" name="Proc. Natl. Acad. Sci. U.S.A.">
        <title>RING fingers mediate ubiquitin-conjugating enzyme (E2)-dependent ubiquitination.</title>
        <authorList>
            <person name="Lorick K.L."/>
            <person name="Jensen J.P."/>
            <person name="Fang S."/>
            <person name="Ong A.M."/>
            <person name="Hatakeyama S."/>
            <person name="Weissman A.M."/>
        </authorList>
    </citation>
    <scope>FUNCTION</scope>
    <scope>MUTAGENESIS OF CYS-621</scope>
</reference>
<reference key="7">
    <citation type="journal article" date="2008" name="Biochem. Biophys. Res. Commun.">
        <title>Ubiquitin ligase Kf-1 is involved in the endoplasmic reticulum-associated degradation pathway.</title>
        <authorList>
            <person name="Maruyama Y."/>
            <person name="Yamada M."/>
            <person name="Takahashi K."/>
            <person name="Yamada M."/>
        </authorList>
    </citation>
    <scope>FUNCTION</scope>
    <scope>SUBCELLULAR LOCATION</scope>
    <scope>INTERACTION WITH DERL1 AND VCP</scope>
</reference>